<protein>
    <recommendedName>
        <fullName>C-C chemokine receptor type 6</fullName>
        <shortName>C-C CKR-6</shortName>
        <shortName>CC-CKR-6</shortName>
        <shortName>CCR-6</shortName>
    </recommendedName>
    <alternativeName>
        <fullName>KY411</fullName>
    </alternativeName>
    <cdAntigenName>CD196</cdAntigenName>
</protein>
<feature type="chain" id="PRO_0000069287" description="C-C chemokine receptor type 6">
    <location>
        <begin position="1"/>
        <end position="367"/>
    </location>
</feature>
<feature type="topological domain" description="Extracellular" evidence="2">
    <location>
        <begin position="1"/>
        <end position="39"/>
    </location>
</feature>
<feature type="transmembrane region" description="Helical; Name=1" evidence="2">
    <location>
        <begin position="40"/>
        <end position="66"/>
    </location>
</feature>
<feature type="topological domain" description="Cytoplasmic" evidence="2">
    <location>
        <begin position="67"/>
        <end position="75"/>
    </location>
</feature>
<feature type="transmembrane region" description="Helical; Name=2" evidence="2">
    <location>
        <begin position="76"/>
        <end position="96"/>
    </location>
</feature>
<feature type="topological domain" description="Extracellular" evidence="2">
    <location>
        <begin position="97"/>
        <end position="111"/>
    </location>
</feature>
<feature type="transmembrane region" description="Helical; Name=3" evidence="2">
    <location>
        <begin position="112"/>
        <end position="133"/>
    </location>
</feature>
<feature type="topological domain" description="Cytoplasmic" evidence="2">
    <location>
        <begin position="134"/>
        <end position="151"/>
    </location>
</feature>
<feature type="transmembrane region" description="Helical; Name=4" evidence="2">
    <location>
        <begin position="152"/>
        <end position="172"/>
    </location>
</feature>
<feature type="topological domain" description="Extracellular" evidence="2">
    <location>
        <begin position="173"/>
        <end position="203"/>
    </location>
</feature>
<feature type="transmembrane region" description="Helical; Name=5" evidence="2">
    <location>
        <begin position="204"/>
        <end position="230"/>
    </location>
</feature>
<feature type="topological domain" description="Cytoplasmic" evidence="2">
    <location>
        <begin position="231"/>
        <end position="246"/>
    </location>
</feature>
<feature type="transmembrane region" description="Helical; Name=6" evidence="2">
    <location>
        <begin position="247"/>
        <end position="271"/>
    </location>
</feature>
<feature type="topological domain" description="Extracellular" evidence="2">
    <location>
        <begin position="272"/>
        <end position="295"/>
    </location>
</feature>
<feature type="transmembrane region" description="Helical; Name=7" evidence="2">
    <location>
        <begin position="296"/>
        <end position="313"/>
    </location>
</feature>
<feature type="topological domain" description="Cytoplasmic" evidence="2">
    <location>
        <begin position="314"/>
        <end position="367"/>
    </location>
</feature>
<feature type="glycosylation site" description="N-linked (GlcNAc...) asparagine" evidence="2">
    <location>
        <position position="2"/>
    </location>
</feature>
<feature type="glycosylation site" description="N-linked (GlcNAc...) asparagine" evidence="2">
    <location>
        <position position="35"/>
    </location>
</feature>
<feature type="disulfide bond" evidence="1 3">
    <location>
        <begin position="110"/>
        <end position="189"/>
    </location>
</feature>
<keyword id="KW-1003">Cell membrane</keyword>
<keyword id="KW-1015">Disulfide bond</keyword>
<keyword id="KW-0297">G-protein coupled receptor</keyword>
<keyword id="KW-0325">Glycoprotein</keyword>
<keyword id="KW-0472">Membrane</keyword>
<keyword id="KW-0675">Receptor</keyword>
<keyword id="KW-1185">Reference proteome</keyword>
<keyword id="KW-0807">Transducer</keyword>
<keyword id="KW-0812">Transmembrane</keyword>
<keyword id="KW-1133">Transmembrane helix</keyword>
<organism>
    <name type="scientific">Mus musculus</name>
    <name type="common">Mouse</name>
    <dbReference type="NCBI Taxonomy" id="10090"/>
    <lineage>
        <taxon>Eukaryota</taxon>
        <taxon>Metazoa</taxon>
        <taxon>Chordata</taxon>
        <taxon>Craniata</taxon>
        <taxon>Vertebrata</taxon>
        <taxon>Euteleostomi</taxon>
        <taxon>Mammalia</taxon>
        <taxon>Eutheria</taxon>
        <taxon>Euarchontoglires</taxon>
        <taxon>Glires</taxon>
        <taxon>Rodentia</taxon>
        <taxon>Myomorpha</taxon>
        <taxon>Muroidea</taxon>
        <taxon>Muridae</taxon>
        <taxon>Murinae</taxon>
        <taxon>Mus</taxon>
        <taxon>Mus</taxon>
    </lineage>
</organism>
<reference key="1">
    <citation type="submission" date="1997-12" db="EMBL/GenBank/DDBJ databases">
        <title>Mouse G protein-coupled receptor KY411.</title>
        <authorList>
            <person name="Yanagihara S."/>
            <person name="Komura E."/>
            <person name="Yamaguchi Y."/>
        </authorList>
    </citation>
    <scope>NUCLEOTIDE SEQUENCE</scope>
</reference>
<reference key="2">
    <citation type="journal article" date="1998" name="FEBS Lett.">
        <title>Molecular cloning, functional characterization and mRNA expression analysis of the murine chemokine receptor CCR6 and its specific ligand MIP-3alpha.</title>
        <authorList>
            <person name="Varona R."/>
            <person name="Zaballos A."/>
            <person name="Gutierrez J."/>
            <person name="Martin P."/>
            <person name="Roncal F."/>
            <person name="Albar J.P."/>
            <person name="Ardavin C."/>
            <person name="Marquez G."/>
        </authorList>
    </citation>
    <scope>NUCLEOTIDE SEQUENCE [GENOMIC DNA]</scope>
</reference>
<reference key="3">
    <citation type="journal article" date="2008" name="J. Immunol.">
        <title>CCR6 regulates the migration of inflammatory and regulatory T cells.</title>
        <authorList>
            <person name="Yamazaki T."/>
            <person name="Yang X.O."/>
            <person name="Chung Y."/>
            <person name="Fukunaga A."/>
            <person name="Nurieva R."/>
            <person name="Pappu B."/>
            <person name="Martin-Orozco N."/>
            <person name="Kang H.S."/>
            <person name="Ma L."/>
            <person name="Panopoulos A.D."/>
            <person name="Craig S."/>
            <person name="Watowich S.S."/>
            <person name="Jetten A.M."/>
            <person name="Tian Q."/>
            <person name="Dong C."/>
        </authorList>
    </citation>
    <scope>FUNCTION</scope>
    <scope>TISSUE SPECIFICITY</scope>
    <scope>INDUCTION</scope>
</reference>
<reference key="4">
    <citation type="journal article" date="2009" name="Mucosal Immunol.">
        <title>The roles of CCR6 in migration of Th17 cells and regulation of effector T-cell balance in the gut.</title>
        <authorList>
            <person name="Wang C."/>
            <person name="Kang S.G."/>
            <person name="Lee J."/>
            <person name="Sun Z."/>
            <person name="Kim C.H."/>
        </authorList>
    </citation>
    <scope>FUNCTION</scope>
    <scope>TISSUE SPECIFICITY</scope>
    <scope>INDUCTION</scope>
</reference>
<reference key="5">
    <citation type="journal article" date="2010" name="J. Biol. Chem.">
        <title>Specific binding and chemotactic activity of mBD4 and its functional orthologue hBD2 to CCR6-expressing cells.</title>
        <authorList>
            <person name="Roehrl J."/>
            <person name="Yang D."/>
            <person name="Oppenheim J.J."/>
            <person name="Hehlgans T."/>
        </authorList>
    </citation>
    <scope>FUNCTION</scope>
    <scope>BINDING TO CCL20; DEFB4 AND DEFB4A</scope>
</reference>
<reference key="6">
    <citation type="journal article" date="2011" name="Exp. Cell Res.">
        <title>CCR6 as a mediator of immunity in the lung and gut.</title>
        <authorList>
            <person name="Ito T."/>
            <person name="Carson W.F. IV"/>
            <person name="Cavassani K.A."/>
            <person name="Connett J.M."/>
            <person name="Kunkel S.L."/>
        </authorList>
    </citation>
    <scope>REVIEW</scope>
    <scope>FUNCTION</scope>
</reference>
<reference key="7">
    <citation type="journal article" date="2014" name="Immunol. Cell Biol.">
        <title>CCR6 supports migration and differentiation of a subset of DN1 early thymocyte progenitors but is not required for thymic nTreg development.</title>
        <authorList>
            <person name="Bunting M.D."/>
            <person name="Comerford I."/>
            <person name="Kara E.E."/>
            <person name="Korner H."/>
            <person name="McColl S.R."/>
        </authorList>
    </citation>
    <scope>FUNCTION</scope>
    <scope>TISSUE SPECIFICITY</scope>
</reference>
<reference key="8">
    <citation type="journal article" date="2014" name="J. Cell. Physiol.">
        <title>A role for the chemokine receptor CCR6 in mammalian sperm motility and chemotaxis.</title>
        <authorList>
            <person name="Caballero-Campo P."/>
            <person name="Buffone M.G."/>
            <person name="Benencia F."/>
            <person name="Conejo-Garcia J.R."/>
            <person name="Rinaudo P.F."/>
            <person name="Gerton G.L."/>
        </authorList>
    </citation>
    <scope>FUNCTION</scope>
    <scope>SUBCELLULAR LOCATION</scope>
    <scope>TISSUE SPECIFICITY</scope>
</reference>
<reference key="9">
    <citation type="journal article" date="2014" name="Sci. Transl. Med.">
        <title>Deficient human beta-defensin 1 underlies male infertility associated with poor sperm motility and genital tract infection.</title>
        <authorList>
            <person name="Diao R."/>
            <person name="Fok K.L."/>
            <person name="Chen H."/>
            <person name="Yu M.K."/>
            <person name="Duan Y."/>
            <person name="Chung C.M."/>
            <person name="Li Z."/>
            <person name="Wu H."/>
            <person name="Li Z."/>
            <person name="Zhang H."/>
            <person name="Ji Z."/>
            <person name="Zhen W."/>
            <person name="Ng C.F."/>
            <person name="Gui Y."/>
            <person name="Cai Z."/>
            <person name="Chan H.C."/>
        </authorList>
    </citation>
    <scope>FUNCTION</scope>
</reference>
<reference key="10">
    <citation type="journal article" date="2015" name="J. Immunol.">
        <title>CCR6-dependent positioning of memory B cells is essential for their ability to mount a recall response to antigen.</title>
        <authorList>
            <person name="Elgueta R."/>
            <person name="Marks E."/>
            <person name="Nowak E."/>
            <person name="Menezes S."/>
            <person name="Benson M."/>
            <person name="Raman V.S."/>
            <person name="Ortiz C."/>
            <person name="O'Connell S."/>
            <person name="Hess H."/>
            <person name="Lord G.M."/>
            <person name="Noelle R."/>
        </authorList>
    </citation>
    <scope>FUNCTION</scope>
    <scope>TISSUE SPECIFICITY</scope>
</reference>
<reference key="11">
    <citation type="journal article" date="2016" name="Science">
        <title>IgA production requires B cell interaction with subepithelial dendritic cells in Peyer's patches.</title>
        <authorList>
            <person name="Reboldi A."/>
            <person name="Arnon T.I."/>
            <person name="Rodda L.B."/>
            <person name="Atakilit A."/>
            <person name="Sheppard D."/>
            <person name="Cyster J.G."/>
        </authorList>
    </citation>
    <scope>FUNCTION</scope>
    <scope>INDUCTION</scope>
</reference>
<dbReference type="EMBL" id="AB009369">
    <property type="protein sequence ID" value="BAA23776.1"/>
    <property type="molecule type" value="mRNA"/>
</dbReference>
<dbReference type="EMBL" id="AJ222714">
    <property type="protein sequence ID" value="CAA10956.1"/>
    <property type="molecule type" value="Genomic_DNA"/>
</dbReference>
<dbReference type="CCDS" id="CCDS28381.1"/>
<dbReference type="RefSeq" id="NP_001177262.1">
    <property type="nucleotide sequence ID" value="NM_001190333.1"/>
</dbReference>
<dbReference type="RefSeq" id="NP_001177263.1">
    <property type="nucleotide sequence ID" value="NM_001190334.1"/>
</dbReference>
<dbReference type="RefSeq" id="NP_001177264.1">
    <property type="nucleotide sequence ID" value="NM_001190335.1"/>
</dbReference>
<dbReference type="RefSeq" id="NP_001177265.1">
    <property type="nucleotide sequence ID" value="NM_001190336.1"/>
</dbReference>
<dbReference type="RefSeq" id="NP_001177266.1">
    <property type="nucleotide sequence ID" value="NM_001190337.1"/>
</dbReference>
<dbReference type="RefSeq" id="NP_033965.1">
    <property type="nucleotide sequence ID" value="NM_009835.4"/>
</dbReference>
<dbReference type="RefSeq" id="XP_006523349.1">
    <property type="nucleotide sequence ID" value="XM_006523286.5"/>
</dbReference>
<dbReference type="RefSeq" id="XP_006523351.1">
    <property type="nucleotide sequence ID" value="XM_006523288.5"/>
</dbReference>
<dbReference type="RefSeq" id="XP_006523353.1">
    <property type="nucleotide sequence ID" value="XM_006523290.3"/>
</dbReference>
<dbReference type="RefSeq" id="XP_006523354.1">
    <property type="nucleotide sequence ID" value="XM_006523291.3"/>
</dbReference>
<dbReference type="RefSeq" id="XP_006523355.1">
    <property type="nucleotide sequence ID" value="XM_006523292.5"/>
</dbReference>
<dbReference type="RefSeq" id="XP_011244488.1">
    <property type="nucleotide sequence ID" value="XM_011246186.4"/>
</dbReference>
<dbReference type="RefSeq" id="XP_011244490.1">
    <property type="nucleotide sequence ID" value="XM_011246188.3"/>
</dbReference>
<dbReference type="RefSeq" id="XP_017172707.1">
    <property type="nucleotide sequence ID" value="XM_017317218.1"/>
</dbReference>
<dbReference type="RefSeq" id="XP_017172708.1">
    <property type="nucleotide sequence ID" value="XM_017317219.1"/>
</dbReference>
<dbReference type="RefSeq" id="XP_017172709.1">
    <property type="nucleotide sequence ID" value="XM_017317220.3"/>
</dbReference>
<dbReference type="RefSeq" id="XP_036016179.1">
    <property type="nucleotide sequence ID" value="XM_036160286.1"/>
</dbReference>
<dbReference type="RefSeq" id="XP_036016180.1">
    <property type="nucleotide sequence ID" value="XM_036160287.1"/>
</dbReference>
<dbReference type="SMR" id="O54689"/>
<dbReference type="FunCoup" id="O54689">
    <property type="interactions" value="385"/>
</dbReference>
<dbReference type="STRING" id="10090.ENSMUSP00000095029"/>
<dbReference type="GlyCosmos" id="O54689">
    <property type="glycosylation" value="2 sites, No reported glycans"/>
</dbReference>
<dbReference type="GlyGen" id="O54689">
    <property type="glycosylation" value="2 sites"/>
</dbReference>
<dbReference type="iPTMnet" id="O54689"/>
<dbReference type="PhosphoSitePlus" id="O54689"/>
<dbReference type="PaxDb" id="10090-ENSMUSP00000095029"/>
<dbReference type="ProteomicsDB" id="279950"/>
<dbReference type="Antibodypedia" id="2930">
    <property type="antibodies" value="864 antibodies from 40 providers"/>
</dbReference>
<dbReference type="DNASU" id="12458"/>
<dbReference type="Ensembl" id="ENSMUST00000097418.8">
    <property type="protein sequence ID" value="ENSMUSP00000095029.2"/>
    <property type="gene ID" value="ENSMUSG00000040899.15"/>
</dbReference>
<dbReference type="Ensembl" id="ENSMUST00000164411.10">
    <property type="protein sequence ID" value="ENSMUSP00000131153.3"/>
    <property type="gene ID" value="ENSMUSG00000040899.15"/>
</dbReference>
<dbReference type="Ensembl" id="ENSMUST00000166348.10">
    <property type="protein sequence ID" value="ENSMUSP00000128559.3"/>
    <property type="gene ID" value="ENSMUSG00000040899.15"/>
</dbReference>
<dbReference type="Ensembl" id="ENSMUST00000167956.10">
    <property type="protein sequence ID" value="ENSMUSP00000128529.3"/>
    <property type="gene ID" value="ENSMUSG00000040899.15"/>
</dbReference>
<dbReference type="Ensembl" id="ENSMUST00000177568.9">
    <property type="protein sequence ID" value="ENSMUSP00000137249.2"/>
    <property type="gene ID" value="ENSMUSG00000040899.15"/>
</dbReference>
<dbReference type="Ensembl" id="ENSMUST00000180103.3">
    <property type="protein sequence ID" value="ENSMUSP00000135945.2"/>
    <property type="gene ID" value="ENSMUSG00000040899.15"/>
</dbReference>
<dbReference type="Ensembl" id="ENSMUST00000231545.2">
    <property type="protein sequence ID" value="ENSMUSP00000156324.2"/>
    <property type="gene ID" value="ENSMUSG00000040899.15"/>
</dbReference>
<dbReference type="GeneID" id="12458"/>
<dbReference type="KEGG" id="mmu:12458"/>
<dbReference type="UCSC" id="uc008ajd.2">
    <property type="organism name" value="mouse"/>
</dbReference>
<dbReference type="AGR" id="MGI:1333797"/>
<dbReference type="CTD" id="1235"/>
<dbReference type="MGI" id="MGI:1333797">
    <property type="gene designation" value="Ccr6"/>
</dbReference>
<dbReference type="VEuPathDB" id="HostDB:ENSMUSG00000040899"/>
<dbReference type="eggNOG" id="KOG3656">
    <property type="taxonomic scope" value="Eukaryota"/>
</dbReference>
<dbReference type="GeneTree" id="ENSGT01030000234667"/>
<dbReference type="HOGENOM" id="CLU_009579_8_3_1"/>
<dbReference type="InParanoid" id="O54689"/>
<dbReference type="OMA" id="TKEICDH"/>
<dbReference type="OrthoDB" id="9828427at2759"/>
<dbReference type="PhylomeDB" id="O54689"/>
<dbReference type="TreeFam" id="TF330966"/>
<dbReference type="Reactome" id="R-MMU-1461957">
    <property type="pathway name" value="Beta defensins"/>
</dbReference>
<dbReference type="Reactome" id="R-MMU-380108">
    <property type="pathway name" value="Chemokine receptors bind chemokines"/>
</dbReference>
<dbReference type="Reactome" id="R-MMU-418594">
    <property type="pathway name" value="G alpha (i) signalling events"/>
</dbReference>
<dbReference type="BioGRID-ORCS" id="12458">
    <property type="hits" value="0 hits in 113 CRISPR screens"/>
</dbReference>
<dbReference type="PRO" id="PR:O54689"/>
<dbReference type="Proteomes" id="UP000000589">
    <property type="component" value="Chromosome 17"/>
</dbReference>
<dbReference type="RNAct" id="O54689">
    <property type="molecule type" value="protein"/>
</dbReference>
<dbReference type="Bgee" id="ENSMUSG00000040899">
    <property type="expression patterns" value="Expressed in spleen and 74 other cell types or tissues"/>
</dbReference>
<dbReference type="ExpressionAtlas" id="O54689">
    <property type="expression patterns" value="baseline and differential"/>
</dbReference>
<dbReference type="GO" id="GO:0009986">
    <property type="term" value="C:cell surface"/>
    <property type="evidence" value="ECO:0000314"/>
    <property type="project" value="MGI"/>
</dbReference>
<dbReference type="GO" id="GO:0009897">
    <property type="term" value="C:external side of plasma membrane"/>
    <property type="evidence" value="ECO:0000314"/>
    <property type="project" value="MGI"/>
</dbReference>
<dbReference type="GO" id="GO:0036126">
    <property type="term" value="C:sperm flagellum"/>
    <property type="evidence" value="ECO:0000314"/>
    <property type="project" value="UniProtKB"/>
</dbReference>
<dbReference type="GO" id="GO:0097225">
    <property type="term" value="C:sperm midpiece"/>
    <property type="evidence" value="ECO:0007669"/>
    <property type="project" value="Ensembl"/>
</dbReference>
<dbReference type="GO" id="GO:0097524">
    <property type="term" value="C:sperm plasma membrane"/>
    <property type="evidence" value="ECO:0000314"/>
    <property type="project" value="UniProtKB"/>
</dbReference>
<dbReference type="GO" id="GO:0097228">
    <property type="term" value="C:sperm principal piece"/>
    <property type="evidence" value="ECO:0000314"/>
    <property type="project" value="UniProtKB"/>
</dbReference>
<dbReference type="GO" id="GO:0019957">
    <property type="term" value="F:C-C chemokine binding"/>
    <property type="evidence" value="ECO:0000314"/>
    <property type="project" value="UniProtKB"/>
</dbReference>
<dbReference type="GO" id="GO:0016493">
    <property type="term" value="F:C-C chemokine receptor activity"/>
    <property type="evidence" value="ECO:0000314"/>
    <property type="project" value="UniProtKB"/>
</dbReference>
<dbReference type="GO" id="GO:0019722">
    <property type="term" value="P:calcium-mediated signaling"/>
    <property type="evidence" value="ECO:0000250"/>
    <property type="project" value="UniProtKB"/>
</dbReference>
<dbReference type="GO" id="GO:0060326">
    <property type="term" value="P:cell chemotaxis"/>
    <property type="evidence" value="ECO:0000250"/>
    <property type="project" value="UniProtKB"/>
</dbReference>
<dbReference type="GO" id="GO:0006935">
    <property type="term" value="P:chemotaxis"/>
    <property type="evidence" value="ECO:0000314"/>
    <property type="project" value="UniProtKB"/>
</dbReference>
<dbReference type="GO" id="GO:1904155">
    <property type="term" value="P:DN2 thymocyte differentiation"/>
    <property type="evidence" value="ECO:0000315"/>
    <property type="project" value="UniProtKB"/>
</dbReference>
<dbReference type="GO" id="GO:1904156">
    <property type="term" value="P:DN3 thymocyte differentiation"/>
    <property type="evidence" value="ECO:0000315"/>
    <property type="project" value="UniProtKB"/>
</dbReference>
<dbReference type="GO" id="GO:0048290">
    <property type="term" value="P:isotype switching to IgA isotypes"/>
    <property type="evidence" value="ECO:0000315"/>
    <property type="project" value="UniProtKB"/>
</dbReference>
<dbReference type="GO" id="GO:0002523">
    <property type="term" value="P:leukocyte migration involved in inflammatory response"/>
    <property type="evidence" value="ECO:0000315"/>
    <property type="project" value="UniProtKB"/>
</dbReference>
<dbReference type="GO" id="GO:0072676">
    <property type="term" value="P:lymphocyte migration"/>
    <property type="evidence" value="ECO:0000315"/>
    <property type="project" value="UniProtKB"/>
</dbReference>
<dbReference type="GO" id="GO:0007204">
    <property type="term" value="P:positive regulation of cytosolic calcium ion concentration"/>
    <property type="evidence" value="ECO:0007669"/>
    <property type="project" value="Ensembl"/>
</dbReference>
<dbReference type="GO" id="GO:2000510">
    <property type="term" value="P:positive regulation of dendritic cell chemotaxis"/>
    <property type="evidence" value="ECO:0007669"/>
    <property type="project" value="Ensembl"/>
</dbReference>
<dbReference type="GO" id="GO:0010634">
    <property type="term" value="P:positive regulation of epithelial cell migration"/>
    <property type="evidence" value="ECO:0007669"/>
    <property type="project" value="Ensembl"/>
</dbReference>
<dbReference type="GO" id="GO:0060474">
    <property type="term" value="P:positive regulation of flagellated sperm motility involved in capacitation"/>
    <property type="evidence" value="ECO:0000314"/>
    <property type="project" value="UniProtKB"/>
</dbReference>
<dbReference type="GO" id="GO:2000404">
    <property type="term" value="P:regulation of T cell migration"/>
    <property type="evidence" value="ECO:0000315"/>
    <property type="project" value="UniProtKB"/>
</dbReference>
<dbReference type="GO" id="GO:0072678">
    <property type="term" value="P:T cell migration"/>
    <property type="evidence" value="ECO:0000314"/>
    <property type="project" value="UniProtKB"/>
</dbReference>
<dbReference type="GO" id="GO:0072679">
    <property type="term" value="P:thymocyte migration"/>
    <property type="evidence" value="ECO:0000314"/>
    <property type="project" value="UniProtKB"/>
</dbReference>
<dbReference type="CDD" id="cd15172">
    <property type="entry name" value="7tmA_CCR6"/>
    <property type="match status" value="1"/>
</dbReference>
<dbReference type="FunFam" id="1.20.1070.10:FF:000035">
    <property type="entry name" value="C-C chemokine receptor type 6"/>
    <property type="match status" value="1"/>
</dbReference>
<dbReference type="Gene3D" id="1.20.1070.10">
    <property type="entry name" value="Rhodopsin 7-helix transmembrane proteins"/>
    <property type="match status" value="1"/>
</dbReference>
<dbReference type="InterPro" id="IPR050119">
    <property type="entry name" value="CCR1-9-like"/>
</dbReference>
<dbReference type="InterPro" id="IPR004067">
    <property type="entry name" value="Chemokine_CCR6"/>
</dbReference>
<dbReference type="InterPro" id="IPR000355">
    <property type="entry name" value="Chemokine_rcpt"/>
</dbReference>
<dbReference type="InterPro" id="IPR000276">
    <property type="entry name" value="GPCR_Rhodpsn"/>
</dbReference>
<dbReference type="InterPro" id="IPR017452">
    <property type="entry name" value="GPCR_Rhodpsn_7TM"/>
</dbReference>
<dbReference type="PANTHER" id="PTHR10489:SF611">
    <property type="entry name" value="C-C CHEMOKINE RECEPTOR TYPE 6"/>
    <property type="match status" value="1"/>
</dbReference>
<dbReference type="PANTHER" id="PTHR10489">
    <property type="entry name" value="CELL ADHESION MOLECULE"/>
    <property type="match status" value="1"/>
</dbReference>
<dbReference type="Pfam" id="PF00001">
    <property type="entry name" value="7tm_1"/>
    <property type="match status" value="1"/>
</dbReference>
<dbReference type="PRINTS" id="PR00657">
    <property type="entry name" value="CCCHEMOKINER"/>
</dbReference>
<dbReference type="PRINTS" id="PR01529">
    <property type="entry name" value="CHEMOKINER6"/>
</dbReference>
<dbReference type="PRINTS" id="PR00237">
    <property type="entry name" value="GPCRRHODOPSN"/>
</dbReference>
<dbReference type="SUPFAM" id="SSF81321">
    <property type="entry name" value="Family A G protein-coupled receptor-like"/>
    <property type="match status" value="1"/>
</dbReference>
<dbReference type="PROSITE" id="PS00237">
    <property type="entry name" value="G_PROTEIN_RECEP_F1_1"/>
    <property type="match status" value="1"/>
</dbReference>
<dbReference type="PROSITE" id="PS50262">
    <property type="entry name" value="G_PROTEIN_RECEP_F1_2"/>
    <property type="match status" value="1"/>
</dbReference>
<comment type="function">
    <text evidence="1 4 5 6 7 8 9 10 11 12">Receptor for the C-C type chemokine CCL20. Binds to CCL20 and subsequently transduces a signal by increasing the intracellular calcium ion levels (PubMed:20068036). Although CCL20 is its major ligand it can also act as a receptor for non-chemokine ligands such as beta-defensins (PubMed:25122636). Binds to defensin DEFB1 leading to increase in intracellular calcium ions and cAMP levels. Its binding to DEFB1 is essential for the function of DEFB1 in regulating sperm motility and bactericidal activity (By similarity). Binds to defensins DEFB4 and DEFB4A/B and mediates their chemotactic effects (PubMed:20068036). The ligand-receptor pair CCL20-CCR6 is responsible for the chemotaxis of dendritic cells (DC), effector/memory T-cells and B-cells and plays an important role at skin and mucosal surfaces under homeostatic and inflammatory conditions, as well as in pathology, including cancer and various autoimmune diseases. CCR6-mediated signals are essential for immune responses to microbes in the intestinal mucosa and in the modulation of inflammatory responses initiated by tissue insult and trauma (PubMed:21376174). CCR6 is essential for the recruitment of both the pro-inflammatory IL17 producing helper T-cells (Th17) and the regulatory T-cells (Treg) to sites of inflammation (PubMed:19050256). Required for the normal migration of Th17 cells in Peyers patches and other related tissue sites of the intestine and plays a role in regulating effector T-cell balance and distribution in inflamed intestine (PubMed:19129757). Plays an important role in the coordination of early thymocyte precursor migration events important for normal subsequent thymocyte precursor development, but is not required for the formation of normal thymic natural regulatory T-cells (nTregs). Required for optimal differentiation of DN2 and DN3 thymocyte precursors (PubMed:24638065). Essential for B-cell localization in the subepithelial dome of Peyers-patches and for efficient B-cell isotype switching to IgA in the Peyers-patches (PubMed:27174992). Essential for appropriate anatomical distribution of memory B-cells in the spleen and for the secondary recall response of memory B-cells (PubMed:25505290). Positively regulates sperm motility and chemotaxis via its binding to CCL20 (PubMed:23765988).</text>
</comment>
<comment type="subcellular location">
    <subcellularLocation>
        <location evidence="7">Cell membrane</location>
        <topology evidence="2">Multi-pass membrane protein</topology>
    </subcellularLocation>
    <subcellularLocation>
        <location evidence="1">Cell surface</location>
    </subcellularLocation>
</comment>
<comment type="tissue specificity">
    <text evidence="4 5 7 8 10">Sperm. Mainly localized in the principal piece and neck region of the tail but is also found in the acrosomal region in a small percentage of sperm cells. Expressed in natural regulatory T cells (nTregs) and a subset of early thymocyte progenitor double-negative 1 (DN1) cells. Expressed in memory B cells. Expressed by IL17 producing helper T-cells (Th17), type 1 effector cells (Th1), type 2 effector cells (Th2) and regulatory T-cells (Treg) (at protein level). Expressed by Th17 cells in spleen, Peyers patches, and lamina propria of small and large intestine. Highly expressed in testis, lung, colon, and dendritic cells.</text>
</comment>
<comment type="induction">
    <text evidence="4 5 11">Up-regulated on pre-germinal center B-cells in a CD40-dependent manner. Up-regulated and down-regulated in Th17 cells by TGFB1 and IL2 respectively.</text>
</comment>
<comment type="similarity">
    <text evidence="3">Belongs to the G-protein coupled receptor 1 family.</text>
</comment>
<sequence length="367" mass="42103">MNSTESYFGTDDYDNTEYYSIPPDHGPCSLEEVRNFTKVFVPIAYSLICVFGLLGNIMVVMTFAFYKKARSMTDVYLLNMAITDILFVLTLPFWAVTHATNTWVFSDALCKLMKGTYAVNFNCGMLLLACISMDRYIAIVQATKSFRVRSRTLTHSKVICVAVWFISIIISSPTFIFNKKYELQDRDVCEPRYRSVSEPITWKLLGMGLELFFGFFTPLLFMVFCYLFIIKTLVQAQNSKRHRAIRVVIAVVLVFLACQIPHNMVLLVTAVNTGKVGRSCSTEKVLAYTRNVAEVLAFLHCCLNPVLYAFIGQKFRNYFMKIMKDVWCMRRKNKMPGFLCARVYSESYISRQTSETVENDNASSFTM</sequence>
<gene>
    <name type="primary">Ccr6</name>
    <name type="synonym">Cmkbr6</name>
</gene>
<evidence type="ECO:0000250" key="1">
    <source>
        <dbReference type="UniProtKB" id="P51684"/>
    </source>
</evidence>
<evidence type="ECO:0000255" key="2"/>
<evidence type="ECO:0000255" key="3">
    <source>
        <dbReference type="PROSITE-ProRule" id="PRU00521"/>
    </source>
</evidence>
<evidence type="ECO:0000269" key="4">
    <source>
    </source>
</evidence>
<evidence type="ECO:0000269" key="5">
    <source>
    </source>
</evidence>
<evidence type="ECO:0000269" key="6">
    <source>
    </source>
</evidence>
<evidence type="ECO:0000269" key="7">
    <source>
    </source>
</evidence>
<evidence type="ECO:0000269" key="8">
    <source>
    </source>
</evidence>
<evidence type="ECO:0000269" key="9">
    <source>
    </source>
</evidence>
<evidence type="ECO:0000269" key="10">
    <source>
    </source>
</evidence>
<evidence type="ECO:0000269" key="11">
    <source>
    </source>
</evidence>
<evidence type="ECO:0000303" key="12">
    <source>
    </source>
</evidence>
<accession>O54689</accession>
<name>CCR6_MOUSE</name>
<proteinExistence type="evidence at protein level"/>